<sequence length="953" mass="113352">MPTYFQRPENALKRANEFIEVGKKEPALDALYDVIKSKKHRTWQNKIHEPILFKYLELCVDLRRSHVAKEGLYQYKLICQQVNIASLEDVIRYFLKLAESRAVEAQEDSRKEASAELDEDVDIEDLDQIQTPESLLLSFVSGEDTQDRTDRVKLTPWVKFLWEAYRNVLELLRNNVRVEKLYHETAQQAFKFCLKYTRRTEFRKLCDNLRNHLNVTLKHQGQPNSVNLNNPDSIQMHLETRLAQLDSAISMELWQEAFKAVEDVYGLMQLSKRPPKPQVMANYYQKVALVFLKAGNFLYHACTQQRLYLLMREQKKSITSEELQKMASHVLLATLSVPIQVSLSNTEKYLELDEVAREKSKRLANLLNLQNTPTRESLLQDMLKANVLQYVNTKVHCLYQLLEKDFRPLDLCAKVNEVCQYLESCDDADLCQYIKPIQNIAVTRLLKQVSQVFQTIEFSRLMALVPFMTEFQLERMIVDIAKEKNLQVRLDHRTKSISFGLDLHVAHREEVPEGPYLQAMPSEGLRNQLTLMSVALQRSIFTIQHDHIKAKKREEQEQMAQNYLRTARKEHKLMLERKTVIEARKEYLESVMQERERREYEKIKKQKVENQEAEQKRLDEERRQREIQRRRQELQDIEKRQAMDKIAALKKTTVGAKALKDLSPEEIDNMNADDIIAKQVEQLDKEKRELQTKLKTQEKKVDYFARAMRMEEIPLLNKQYEEHLVADREFWENQEEERVRKAIEEHEKLVETSARLQRMIPDKDAFINTLRESRTEEYQAKFQAFQAKLEQVRKERLEVRRKRRIKDRKERKKIEMEEAKKREQEEKERKKEEKERIEREEREAKEREYAERIAKQNEIDRKRREKELEIERRLEERAGVGQVQQIRCLFITGWGDHEDGGDRWRDERGGDRGPDRGGDKPGAWRPKWQREEPDRGGDRWRGGDRRDGMITMS</sequence>
<keyword id="KW-0175">Coiled coil</keyword>
<keyword id="KW-0963">Cytoplasm</keyword>
<keyword id="KW-0396">Initiation factor</keyword>
<keyword id="KW-0648">Protein biosynthesis</keyword>
<keyword id="KW-1185">Reference proteome</keyword>
<keyword id="KW-0694">RNA-binding</keyword>
<dbReference type="EMBL" id="DS469683">
    <property type="protein sequence ID" value="EDO35952.1"/>
    <property type="status" value="ALT_SEQ"/>
    <property type="molecule type" value="Genomic_DNA"/>
</dbReference>
<dbReference type="RefSeq" id="XP_001628015.1">
    <property type="nucleotide sequence ID" value="XM_001627965.1"/>
</dbReference>
<dbReference type="SMR" id="A7SK48"/>
<dbReference type="STRING" id="45351.A7SK48"/>
<dbReference type="KEGG" id="nve:5507362"/>
<dbReference type="eggNOG" id="KOG2072">
    <property type="taxonomic scope" value="Eukaryota"/>
</dbReference>
<dbReference type="HOGENOM" id="CLU_002096_2_2_1"/>
<dbReference type="InParanoid" id="A7SK48"/>
<dbReference type="OrthoDB" id="18884at2759"/>
<dbReference type="PhylomeDB" id="A7SK48"/>
<dbReference type="Proteomes" id="UP000001593">
    <property type="component" value="Unassembled WGS sequence"/>
</dbReference>
<dbReference type="GO" id="GO:0016282">
    <property type="term" value="C:eukaryotic 43S preinitiation complex"/>
    <property type="evidence" value="ECO:0007669"/>
    <property type="project" value="UniProtKB-UniRule"/>
</dbReference>
<dbReference type="GO" id="GO:0033290">
    <property type="term" value="C:eukaryotic 48S preinitiation complex"/>
    <property type="evidence" value="ECO:0007669"/>
    <property type="project" value="UniProtKB-UniRule"/>
</dbReference>
<dbReference type="GO" id="GO:0071540">
    <property type="term" value="C:eukaryotic translation initiation factor 3 complex, eIF3e"/>
    <property type="evidence" value="ECO:0000318"/>
    <property type="project" value="GO_Central"/>
</dbReference>
<dbReference type="GO" id="GO:0071541">
    <property type="term" value="C:eukaryotic translation initiation factor 3 complex, eIF3m"/>
    <property type="evidence" value="ECO:0000318"/>
    <property type="project" value="GO_Central"/>
</dbReference>
<dbReference type="GO" id="GO:0043614">
    <property type="term" value="C:multi-eIF complex"/>
    <property type="evidence" value="ECO:0000318"/>
    <property type="project" value="GO_Central"/>
</dbReference>
<dbReference type="GO" id="GO:0003729">
    <property type="term" value="F:mRNA binding"/>
    <property type="evidence" value="ECO:0000318"/>
    <property type="project" value="GO_Central"/>
</dbReference>
<dbReference type="GO" id="GO:0003743">
    <property type="term" value="F:translation initiation factor activity"/>
    <property type="evidence" value="ECO:0007669"/>
    <property type="project" value="UniProtKB-UniRule"/>
</dbReference>
<dbReference type="GO" id="GO:0001732">
    <property type="term" value="P:formation of cytoplasmic translation initiation complex"/>
    <property type="evidence" value="ECO:0000318"/>
    <property type="project" value="GO_Central"/>
</dbReference>
<dbReference type="GO" id="GO:0002188">
    <property type="term" value="P:translation reinitiation"/>
    <property type="evidence" value="ECO:0000318"/>
    <property type="project" value="GO_Central"/>
</dbReference>
<dbReference type="FunFam" id="4.10.860.10:FF:000001">
    <property type="entry name" value="Eukaryotic translation initiation factor 3 subunit A"/>
    <property type="match status" value="1"/>
</dbReference>
<dbReference type="Gene3D" id="1.25.40.860">
    <property type="match status" value="1"/>
</dbReference>
<dbReference type="Gene3D" id="4.10.860.10">
    <property type="entry name" value="UVR domain"/>
    <property type="match status" value="1"/>
</dbReference>
<dbReference type="HAMAP" id="MF_03000">
    <property type="entry name" value="eIF3a"/>
    <property type="match status" value="1"/>
</dbReference>
<dbReference type="InterPro" id="IPR027512">
    <property type="entry name" value="EIF3A"/>
</dbReference>
<dbReference type="InterPro" id="IPR054711">
    <property type="entry name" value="eIF3a_PCI_TPR-like"/>
</dbReference>
<dbReference type="InterPro" id="IPR000717">
    <property type="entry name" value="PCI_dom"/>
</dbReference>
<dbReference type="PANTHER" id="PTHR14005:SF0">
    <property type="entry name" value="EUKARYOTIC TRANSLATION INITIATION FACTOR 3 SUBUNIT A"/>
    <property type="match status" value="1"/>
</dbReference>
<dbReference type="PANTHER" id="PTHR14005">
    <property type="entry name" value="EUKARYOTIC TRANSLATION INITIATION FACTOR 3, THETA SUBUNIT"/>
    <property type="match status" value="1"/>
</dbReference>
<dbReference type="Pfam" id="PF22591">
    <property type="entry name" value="eIF3a_PCI_TPR-like"/>
    <property type="match status" value="1"/>
</dbReference>
<dbReference type="Pfam" id="PF01399">
    <property type="entry name" value="PCI"/>
    <property type="match status" value="1"/>
</dbReference>
<dbReference type="SMART" id="SM00088">
    <property type="entry name" value="PINT"/>
    <property type="match status" value="1"/>
</dbReference>
<dbReference type="PROSITE" id="PS50250">
    <property type="entry name" value="PCI"/>
    <property type="match status" value="1"/>
</dbReference>
<evidence type="ECO:0000255" key="1">
    <source>
        <dbReference type="HAMAP-Rule" id="MF_03000"/>
    </source>
</evidence>
<evidence type="ECO:0000255" key="2">
    <source>
        <dbReference type="PROSITE-ProRule" id="PRU01185"/>
    </source>
</evidence>
<evidence type="ECO:0000256" key="3">
    <source>
        <dbReference type="SAM" id="MobiDB-lite"/>
    </source>
</evidence>
<evidence type="ECO:0000305" key="4"/>
<protein>
    <recommendedName>
        <fullName evidence="1">Eukaryotic translation initiation factor 3 subunit A</fullName>
        <shortName evidence="1">eIF3a</shortName>
    </recommendedName>
    <alternativeName>
        <fullName evidence="1">Eukaryotic translation initiation factor 3 subunit 10</fullName>
    </alternativeName>
</protein>
<organism>
    <name type="scientific">Nematostella vectensis</name>
    <name type="common">Starlet sea anemone</name>
    <dbReference type="NCBI Taxonomy" id="45351"/>
    <lineage>
        <taxon>Eukaryota</taxon>
        <taxon>Metazoa</taxon>
        <taxon>Cnidaria</taxon>
        <taxon>Anthozoa</taxon>
        <taxon>Hexacorallia</taxon>
        <taxon>Actiniaria</taxon>
        <taxon>Edwardsiidae</taxon>
        <taxon>Nematostella</taxon>
    </lineage>
</organism>
<name>EIF3A_NEMVE</name>
<proteinExistence type="inferred from homology"/>
<accession>A7SK48</accession>
<comment type="function">
    <text evidence="1">RNA-binding component of the eukaryotic translation initiation factor 3 (eIF-3) complex, which is involved in protein synthesis of a specialized repertoire of mRNAs and, together with other initiation factors, stimulates binding of mRNA and methionyl-tRNAi to the 40S ribosome. The eIF-3 complex specifically targets and initiates translation of a subset of mRNAs involved in cell proliferation.</text>
</comment>
<comment type="subunit">
    <text evidence="1">Component of the eukaryotic translation initiation factor 3 (eIF-3) complex.</text>
</comment>
<comment type="subcellular location">
    <subcellularLocation>
        <location evidence="1">Cytoplasm</location>
    </subcellularLocation>
</comment>
<comment type="similarity">
    <text evidence="1">Belongs to the eIF-3 subunit A family.</text>
</comment>
<comment type="sequence caution" evidence="4">
    <conflict type="erroneous gene model prediction">
        <sequence resource="EMBL-CDS" id="EDO35952"/>
    </conflict>
</comment>
<feature type="chain" id="PRO_0000366346" description="Eukaryotic translation initiation factor 3 subunit A">
    <location>
        <begin position="1"/>
        <end position="953"/>
    </location>
</feature>
<feature type="domain" description="PCI" evidence="2">
    <location>
        <begin position="323"/>
        <end position="504"/>
    </location>
</feature>
<feature type="region of interest" description="Disordered" evidence="3">
    <location>
        <begin position="603"/>
        <end position="623"/>
    </location>
</feature>
<feature type="region of interest" description="Disordered" evidence="3">
    <location>
        <begin position="810"/>
        <end position="861"/>
    </location>
</feature>
<feature type="region of interest" description="Disordered" evidence="3">
    <location>
        <begin position="893"/>
        <end position="953"/>
    </location>
</feature>
<feature type="coiled-coil region" evidence="1">
    <location>
        <begin position="593"/>
        <end position="642"/>
    </location>
</feature>
<feature type="coiled-coil region" evidence="1">
    <location>
        <begin position="670"/>
        <end position="704"/>
    </location>
</feature>
<feature type="coiled-coil region" evidence="1">
    <location>
        <begin position="732"/>
        <end position="877"/>
    </location>
</feature>
<feature type="compositionally biased region" description="Basic and acidic residues" evidence="3">
    <location>
        <begin position="812"/>
        <end position="861"/>
    </location>
</feature>
<feature type="compositionally biased region" description="Basic and acidic residues" evidence="3">
    <location>
        <begin position="895"/>
        <end position="919"/>
    </location>
</feature>
<feature type="compositionally biased region" description="Basic and acidic residues" evidence="3">
    <location>
        <begin position="928"/>
        <end position="953"/>
    </location>
</feature>
<reference key="1">
    <citation type="journal article" date="2007" name="Science">
        <title>Sea anemone genome reveals ancestral eumetazoan gene repertoire and genomic organization.</title>
        <authorList>
            <person name="Putnam N.H."/>
            <person name="Srivastava M."/>
            <person name="Hellsten U."/>
            <person name="Dirks B."/>
            <person name="Chapman J."/>
            <person name="Salamov A."/>
            <person name="Terry A."/>
            <person name="Shapiro H."/>
            <person name="Lindquist E."/>
            <person name="Kapitonov V.V."/>
            <person name="Jurka J."/>
            <person name="Genikhovich G."/>
            <person name="Grigoriev I.V."/>
            <person name="Lucas S.M."/>
            <person name="Steele R.E."/>
            <person name="Finnerty J.R."/>
            <person name="Technau U."/>
            <person name="Martindale M.Q."/>
            <person name="Rokhsar D.S."/>
        </authorList>
    </citation>
    <scope>NUCLEOTIDE SEQUENCE [LARGE SCALE GENOMIC DNA]</scope>
    <source>
        <strain>CH2 X CH6</strain>
    </source>
</reference>
<gene>
    <name type="ORF">v1g190699</name>
</gene>